<protein>
    <recommendedName>
        <fullName evidence="1">Adenylate kinase</fullName>
        <shortName evidence="1">AK</shortName>
        <ecNumber evidence="1">2.7.4.3</ecNumber>
    </recommendedName>
    <alternativeName>
        <fullName evidence="1">ATP-AMP transphosphorylase</fullName>
    </alternativeName>
    <alternativeName>
        <fullName evidence="1">ATP:AMP phosphotransferase</fullName>
    </alternativeName>
    <alternativeName>
        <fullName evidence="1">Adenylate monophosphate kinase</fullName>
    </alternativeName>
</protein>
<organism>
    <name type="scientific">Clostridium perfringens (strain ATCC 13124 / DSM 756 / JCM 1290 / NCIMB 6125 / NCTC 8237 / Type A)</name>
    <dbReference type="NCBI Taxonomy" id="195103"/>
    <lineage>
        <taxon>Bacteria</taxon>
        <taxon>Bacillati</taxon>
        <taxon>Bacillota</taxon>
        <taxon>Clostridia</taxon>
        <taxon>Eubacteriales</taxon>
        <taxon>Clostridiaceae</taxon>
        <taxon>Clostridium</taxon>
    </lineage>
</organism>
<comment type="function">
    <text evidence="1">Catalyzes the reversible transfer of the terminal phosphate group between ATP and AMP. Plays an important role in cellular energy homeostasis and in adenine nucleotide metabolism.</text>
</comment>
<comment type="catalytic activity">
    <reaction evidence="1">
        <text>AMP + ATP = 2 ADP</text>
        <dbReference type="Rhea" id="RHEA:12973"/>
        <dbReference type="ChEBI" id="CHEBI:30616"/>
        <dbReference type="ChEBI" id="CHEBI:456215"/>
        <dbReference type="ChEBI" id="CHEBI:456216"/>
        <dbReference type="EC" id="2.7.4.3"/>
    </reaction>
</comment>
<comment type="pathway">
    <text evidence="1">Purine metabolism; AMP biosynthesis via salvage pathway; AMP from ADP: step 1/1.</text>
</comment>
<comment type="subunit">
    <text evidence="1">Monomer.</text>
</comment>
<comment type="subcellular location">
    <subcellularLocation>
        <location evidence="1">Cytoplasm</location>
    </subcellularLocation>
</comment>
<comment type="domain">
    <text evidence="1">Consists of three domains, a large central CORE domain and two small peripheral domains, NMPbind and LID, which undergo movements during catalysis. The LID domain closes over the site of phosphoryl transfer upon ATP binding. Assembling and dissambling the active center during each catalytic cycle provides an effective means to prevent ATP hydrolysis. Some bacteria have evolved a zinc-coordinating structure that stabilizes the LID domain.</text>
</comment>
<comment type="similarity">
    <text evidence="1">Belongs to the adenylate kinase family.</text>
</comment>
<gene>
    <name evidence="1" type="primary">adk</name>
    <name type="ordered locus">CPF_2693</name>
</gene>
<keyword id="KW-0067">ATP-binding</keyword>
<keyword id="KW-0963">Cytoplasm</keyword>
<keyword id="KW-0418">Kinase</keyword>
<keyword id="KW-0479">Metal-binding</keyword>
<keyword id="KW-0545">Nucleotide biosynthesis</keyword>
<keyword id="KW-0547">Nucleotide-binding</keyword>
<keyword id="KW-0808">Transferase</keyword>
<keyword id="KW-0862">Zinc</keyword>
<feature type="chain" id="PRO_1000021723" description="Adenylate kinase">
    <location>
        <begin position="1"/>
        <end position="216"/>
    </location>
</feature>
<feature type="region of interest" description="NMP" evidence="1">
    <location>
        <begin position="30"/>
        <end position="59"/>
    </location>
</feature>
<feature type="region of interest" description="LID" evidence="1">
    <location>
        <begin position="126"/>
        <end position="163"/>
    </location>
</feature>
<feature type="binding site" evidence="1">
    <location>
        <begin position="10"/>
        <end position="15"/>
    </location>
    <ligand>
        <name>ATP</name>
        <dbReference type="ChEBI" id="CHEBI:30616"/>
    </ligand>
</feature>
<feature type="binding site" evidence="1">
    <location>
        <position position="31"/>
    </location>
    <ligand>
        <name>AMP</name>
        <dbReference type="ChEBI" id="CHEBI:456215"/>
    </ligand>
</feature>
<feature type="binding site" evidence="1">
    <location>
        <position position="36"/>
    </location>
    <ligand>
        <name>AMP</name>
        <dbReference type="ChEBI" id="CHEBI:456215"/>
    </ligand>
</feature>
<feature type="binding site" evidence="1">
    <location>
        <begin position="57"/>
        <end position="59"/>
    </location>
    <ligand>
        <name>AMP</name>
        <dbReference type="ChEBI" id="CHEBI:456215"/>
    </ligand>
</feature>
<feature type="binding site" evidence="1">
    <location>
        <begin position="85"/>
        <end position="88"/>
    </location>
    <ligand>
        <name>AMP</name>
        <dbReference type="ChEBI" id="CHEBI:456215"/>
    </ligand>
</feature>
<feature type="binding site" evidence="1">
    <location>
        <position position="92"/>
    </location>
    <ligand>
        <name>AMP</name>
        <dbReference type="ChEBI" id="CHEBI:456215"/>
    </ligand>
</feature>
<feature type="binding site" evidence="1">
    <location>
        <position position="127"/>
    </location>
    <ligand>
        <name>ATP</name>
        <dbReference type="ChEBI" id="CHEBI:30616"/>
    </ligand>
</feature>
<feature type="binding site" evidence="1">
    <location>
        <position position="130"/>
    </location>
    <ligand>
        <name>Zn(2+)</name>
        <dbReference type="ChEBI" id="CHEBI:29105"/>
        <note>structural</note>
    </ligand>
</feature>
<feature type="binding site" evidence="1">
    <location>
        <position position="133"/>
    </location>
    <ligand>
        <name>Zn(2+)</name>
        <dbReference type="ChEBI" id="CHEBI:29105"/>
        <note>structural</note>
    </ligand>
</feature>
<feature type="binding site" evidence="1">
    <location>
        <begin position="136"/>
        <end position="137"/>
    </location>
    <ligand>
        <name>ATP</name>
        <dbReference type="ChEBI" id="CHEBI:30616"/>
    </ligand>
</feature>
<feature type="binding site" evidence="1">
    <location>
        <position position="150"/>
    </location>
    <ligand>
        <name>Zn(2+)</name>
        <dbReference type="ChEBI" id="CHEBI:29105"/>
        <note>structural</note>
    </ligand>
</feature>
<feature type="binding site" evidence="1">
    <location>
        <position position="153"/>
    </location>
    <ligand>
        <name>Zn(2+)</name>
        <dbReference type="ChEBI" id="CHEBI:29105"/>
        <note>structural</note>
    </ligand>
</feature>
<feature type="binding site" evidence="1">
    <location>
        <position position="160"/>
    </location>
    <ligand>
        <name>AMP</name>
        <dbReference type="ChEBI" id="CHEBI:456215"/>
    </ligand>
</feature>
<feature type="binding site" evidence="1">
    <location>
        <position position="171"/>
    </location>
    <ligand>
        <name>AMP</name>
        <dbReference type="ChEBI" id="CHEBI:456215"/>
    </ligand>
</feature>
<feature type="binding site" evidence="1">
    <location>
        <position position="199"/>
    </location>
    <ligand>
        <name>ATP</name>
        <dbReference type="ChEBI" id="CHEBI:30616"/>
    </ligand>
</feature>
<evidence type="ECO:0000255" key="1">
    <source>
        <dbReference type="HAMAP-Rule" id="MF_00235"/>
    </source>
</evidence>
<accession>Q0TMR7</accession>
<dbReference type="EC" id="2.7.4.3" evidence="1"/>
<dbReference type="EMBL" id="CP000246">
    <property type="protein sequence ID" value="ABG83640.1"/>
    <property type="molecule type" value="Genomic_DNA"/>
</dbReference>
<dbReference type="RefSeq" id="WP_003454337.1">
    <property type="nucleotide sequence ID" value="NC_008261.1"/>
</dbReference>
<dbReference type="SMR" id="Q0TMR7"/>
<dbReference type="STRING" id="195103.CPF_2693"/>
<dbReference type="PaxDb" id="195103-CPF_2693"/>
<dbReference type="KEGG" id="cpf:CPF_2693"/>
<dbReference type="eggNOG" id="COG0563">
    <property type="taxonomic scope" value="Bacteria"/>
</dbReference>
<dbReference type="HOGENOM" id="CLU_032354_1_2_9"/>
<dbReference type="UniPathway" id="UPA00588">
    <property type="reaction ID" value="UER00649"/>
</dbReference>
<dbReference type="Proteomes" id="UP000001823">
    <property type="component" value="Chromosome"/>
</dbReference>
<dbReference type="GO" id="GO:0005737">
    <property type="term" value="C:cytoplasm"/>
    <property type="evidence" value="ECO:0007669"/>
    <property type="project" value="UniProtKB-SubCell"/>
</dbReference>
<dbReference type="GO" id="GO:0004017">
    <property type="term" value="F:adenylate kinase activity"/>
    <property type="evidence" value="ECO:0007669"/>
    <property type="project" value="UniProtKB-UniRule"/>
</dbReference>
<dbReference type="GO" id="GO:0005524">
    <property type="term" value="F:ATP binding"/>
    <property type="evidence" value="ECO:0007669"/>
    <property type="project" value="UniProtKB-UniRule"/>
</dbReference>
<dbReference type="GO" id="GO:0008270">
    <property type="term" value="F:zinc ion binding"/>
    <property type="evidence" value="ECO:0007669"/>
    <property type="project" value="UniProtKB-UniRule"/>
</dbReference>
<dbReference type="GO" id="GO:0044209">
    <property type="term" value="P:AMP salvage"/>
    <property type="evidence" value="ECO:0007669"/>
    <property type="project" value="UniProtKB-UniRule"/>
</dbReference>
<dbReference type="CDD" id="cd01428">
    <property type="entry name" value="ADK"/>
    <property type="match status" value="1"/>
</dbReference>
<dbReference type="FunFam" id="3.40.50.300:FF:000106">
    <property type="entry name" value="Adenylate kinase mitochondrial"/>
    <property type="match status" value="1"/>
</dbReference>
<dbReference type="Gene3D" id="3.40.50.300">
    <property type="entry name" value="P-loop containing nucleotide triphosphate hydrolases"/>
    <property type="match status" value="1"/>
</dbReference>
<dbReference type="HAMAP" id="MF_00235">
    <property type="entry name" value="Adenylate_kinase_Adk"/>
    <property type="match status" value="1"/>
</dbReference>
<dbReference type="InterPro" id="IPR006259">
    <property type="entry name" value="Adenyl_kin_sub"/>
</dbReference>
<dbReference type="InterPro" id="IPR000850">
    <property type="entry name" value="Adenylat/UMP-CMP_kin"/>
</dbReference>
<dbReference type="InterPro" id="IPR033690">
    <property type="entry name" value="Adenylat_kinase_CS"/>
</dbReference>
<dbReference type="InterPro" id="IPR007862">
    <property type="entry name" value="Adenylate_kinase_lid-dom"/>
</dbReference>
<dbReference type="InterPro" id="IPR027417">
    <property type="entry name" value="P-loop_NTPase"/>
</dbReference>
<dbReference type="NCBIfam" id="TIGR01351">
    <property type="entry name" value="adk"/>
    <property type="match status" value="1"/>
</dbReference>
<dbReference type="NCBIfam" id="NF001379">
    <property type="entry name" value="PRK00279.1-1"/>
    <property type="match status" value="1"/>
</dbReference>
<dbReference type="NCBIfam" id="NF001380">
    <property type="entry name" value="PRK00279.1-2"/>
    <property type="match status" value="1"/>
</dbReference>
<dbReference type="NCBIfam" id="NF001381">
    <property type="entry name" value="PRK00279.1-3"/>
    <property type="match status" value="1"/>
</dbReference>
<dbReference type="NCBIfam" id="NF011100">
    <property type="entry name" value="PRK14527.1"/>
    <property type="match status" value="1"/>
</dbReference>
<dbReference type="PANTHER" id="PTHR23359">
    <property type="entry name" value="NUCLEOTIDE KINASE"/>
    <property type="match status" value="1"/>
</dbReference>
<dbReference type="Pfam" id="PF00406">
    <property type="entry name" value="ADK"/>
    <property type="match status" value="1"/>
</dbReference>
<dbReference type="Pfam" id="PF05191">
    <property type="entry name" value="ADK_lid"/>
    <property type="match status" value="1"/>
</dbReference>
<dbReference type="PRINTS" id="PR00094">
    <property type="entry name" value="ADENYLTKNASE"/>
</dbReference>
<dbReference type="SUPFAM" id="SSF52540">
    <property type="entry name" value="P-loop containing nucleoside triphosphate hydrolases"/>
    <property type="match status" value="1"/>
</dbReference>
<dbReference type="PROSITE" id="PS00113">
    <property type="entry name" value="ADENYLATE_KINASE"/>
    <property type="match status" value="1"/>
</dbReference>
<name>KAD_CLOP1</name>
<sequence>MKIVLLGPPGAGKGTQAKSISNRYSIPHISTGDIFRKNISENTPLGIEAKSYMDNGQLVPDEVTINMVKDRLQQDDCKNGYLLDGFPRTVHQAEALDNFLTEREESIDTALLIEVPKEFILERMTGRRVCPSCGASYHIKFNPPTNDGKCDLCGSDVIQRKDDTEETVKERLDVYENQTQPLIDFYKNKKQLSVVDGTQAINEVFESICKILGSDK</sequence>
<reference key="1">
    <citation type="journal article" date="2006" name="Genome Res.">
        <title>Skewed genomic variability in strains of the toxigenic bacterial pathogen, Clostridium perfringens.</title>
        <authorList>
            <person name="Myers G.S.A."/>
            <person name="Rasko D.A."/>
            <person name="Cheung J.K."/>
            <person name="Ravel J."/>
            <person name="Seshadri R."/>
            <person name="DeBoy R.T."/>
            <person name="Ren Q."/>
            <person name="Varga J."/>
            <person name="Awad M.M."/>
            <person name="Brinkac L.M."/>
            <person name="Daugherty S.C."/>
            <person name="Haft D.H."/>
            <person name="Dodson R.J."/>
            <person name="Madupu R."/>
            <person name="Nelson W.C."/>
            <person name="Rosovitz M.J."/>
            <person name="Sullivan S.A."/>
            <person name="Khouri H."/>
            <person name="Dimitrov G.I."/>
            <person name="Watkins K.L."/>
            <person name="Mulligan S."/>
            <person name="Benton J."/>
            <person name="Radune D."/>
            <person name="Fisher D.J."/>
            <person name="Atkins H.S."/>
            <person name="Hiscox T."/>
            <person name="Jost B.H."/>
            <person name="Billington S.J."/>
            <person name="Songer J.G."/>
            <person name="McClane B.A."/>
            <person name="Titball R.W."/>
            <person name="Rood J.I."/>
            <person name="Melville S.B."/>
            <person name="Paulsen I.T."/>
        </authorList>
    </citation>
    <scope>NUCLEOTIDE SEQUENCE [LARGE SCALE GENOMIC DNA]</scope>
    <source>
        <strain>ATCC 13124 / DSM 756 / JCM 1290 / NCIMB 6125 / NCTC 8237 / S 107 / Type A</strain>
    </source>
</reference>
<proteinExistence type="inferred from homology"/>